<name>NACA_EREGS</name>
<gene>
    <name type="primary">EGD2</name>
    <name type="ordered locus">AER168C</name>
</gene>
<comment type="function">
    <text evidence="1">Component of the nascent polypeptide-associated complex (NAC), a dynamic component of the ribosomal exit tunnel, protecting the emerging polypeptides from interaction with other cytoplasmic proteins to ensure appropriate nascent protein targeting. The NAC complex also promotes mitochondrial protein import by enhancing productive ribosome interactions with the outer mitochondrial membrane and blocks the inappropriate interaction of ribosomes translating non-secretory nascent polypeptides with translocation sites in the membrane of the endoplasmic reticulum. EGD2 may also be involved in transcription regulation (By similarity).</text>
</comment>
<comment type="subunit">
    <text evidence="1">Part of the nascent polypeptide-associated complex (NAC), consisting of EGD2 and EGD1. NAC associates with ribosomes via EGD1 (By similarity).</text>
</comment>
<comment type="subcellular location">
    <subcellularLocation>
        <location evidence="1">Cytoplasm</location>
    </subcellularLocation>
    <subcellularLocation>
        <location evidence="1">Nucleus</location>
    </subcellularLocation>
    <text evidence="1">Predominantly cytoplasmic, may also transiently localize to the nucleus.</text>
</comment>
<comment type="similarity">
    <text evidence="4">Belongs to the NAC-alpha family.</text>
</comment>
<keyword id="KW-0963">Cytoplasm</keyword>
<keyword id="KW-0539">Nucleus</keyword>
<keyword id="KW-0653">Protein transport</keyword>
<keyword id="KW-1185">Reference proteome</keyword>
<keyword id="KW-0813">Transport</keyword>
<evidence type="ECO:0000250" key="1"/>
<evidence type="ECO:0000255" key="2">
    <source>
        <dbReference type="PROSITE-ProRule" id="PRU00507"/>
    </source>
</evidence>
<evidence type="ECO:0000256" key="3">
    <source>
        <dbReference type="SAM" id="MobiDB-lite"/>
    </source>
</evidence>
<evidence type="ECO:0000305" key="4"/>
<reference key="1">
    <citation type="journal article" date="2004" name="Science">
        <title>The Ashbya gossypii genome as a tool for mapping the ancient Saccharomyces cerevisiae genome.</title>
        <authorList>
            <person name="Dietrich F.S."/>
            <person name="Voegeli S."/>
            <person name="Brachat S."/>
            <person name="Lerch A."/>
            <person name="Gates K."/>
            <person name="Steiner S."/>
            <person name="Mohr C."/>
            <person name="Poehlmann R."/>
            <person name="Luedi P."/>
            <person name="Choi S."/>
            <person name="Wing R.A."/>
            <person name="Flavier A."/>
            <person name="Gaffney T.D."/>
            <person name="Philippsen P."/>
        </authorList>
    </citation>
    <scope>NUCLEOTIDE SEQUENCE [LARGE SCALE GENOMIC DNA]</scope>
    <source>
        <strain>ATCC 10895 / CBS 109.51 / FGSC 9923 / NRRL Y-1056</strain>
    </source>
</reference>
<reference key="2">
    <citation type="journal article" date="2013" name="G3 (Bethesda)">
        <title>Genomes of Ashbya fungi isolated from insects reveal four mating-type loci, numerous translocations, lack of transposons, and distinct gene duplications.</title>
        <authorList>
            <person name="Dietrich F.S."/>
            <person name="Voegeli S."/>
            <person name="Kuo S."/>
            <person name="Philippsen P."/>
        </authorList>
    </citation>
    <scope>GENOME REANNOTATION</scope>
    <source>
        <strain>ATCC 10895 / CBS 109.51 / FGSC 9923 / NRRL Y-1056</strain>
    </source>
</reference>
<sequence length="168" mass="18217">MSEIPENSKVSIYSKNEKKARELIQKFSMKPMPGITRVTFRKKNNQIFAIDNPDVYKTQGGNYVVFGEPKVDDFTRRLARAQQQAASAAKDPQSIQADMAAAAAAPAAPAAPAAAPEEDEAGQVDESGLDGQDIELVMQQANVSRNKAVKALREHNSDIVNAIMSLSK</sequence>
<organism>
    <name type="scientific">Eremothecium gossypii (strain ATCC 10895 / CBS 109.51 / FGSC 9923 / NRRL Y-1056)</name>
    <name type="common">Yeast</name>
    <name type="synonym">Ashbya gossypii</name>
    <dbReference type="NCBI Taxonomy" id="284811"/>
    <lineage>
        <taxon>Eukaryota</taxon>
        <taxon>Fungi</taxon>
        <taxon>Dikarya</taxon>
        <taxon>Ascomycota</taxon>
        <taxon>Saccharomycotina</taxon>
        <taxon>Saccharomycetes</taxon>
        <taxon>Saccharomycetales</taxon>
        <taxon>Saccharomycetaceae</taxon>
        <taxon>Eremothecium</taxon>
    </lineage>
</organism>
<protein>
    <recommendedName>
        <fullName>Nascent polypeptide-associated complex subunit alpha</fullName>
        <shortName>NAC-alpha</shortName>
    </recommendedName>
    <alternativeName>
        <fullName>Alpha-NAC</fullName>
    </alternativeName>
</protein>
<feature type="chain" id="PRO_0000273479" description="Nascent polypeptide-associated complex subunit alpha">
    <location>
        <begin position="1"/>
        <end position="168"/>
    </location>
</feature>
<feature type="domain" description="NAC-A/B" evidence="2">
    <location>
        <begin position="14"/>
        <end position="78"/>
    </location>
</feature>
<feature type="domain" description="UBA">
    <location>
        <begin position="129"/>
        <end position="168"/>
    </location>
</feature>
<feature type="region of interest" description="Disordered" evidence="3">
    <location>
        <begin position="83"/>
        <end position="129"/>
    </location>
</feature>
<feature type="compositionally biased region" description="Low complexity" evidence="3">
    <location>
        <begin position="100"/>
        <end position="115"/>
    </location>
</feature>
<proteinExistence type="inferred from homology"/>
<dbReference type="EMBL" id="AE016818">
    <property type="protein sequence ID" value="AAS52850.1"/>
    <property type="molecule type" value="Genomic_DNA"/>
</dbReference>
<dbReference type="RefSeq" id="NP_985026.1">
    <property type="nucleotide sequence ID" value="NM_210380.1"/>
</dbReference>
<dbReference type="SMR" id="Q756T5"/>
<dbReference type="FunCoup" id="Q756T5">
    <property type="interactions" value="609"/>
</dbReference>
<dbReference type="STRING" id="284811.Q756T5"/>
<dbReference type="EnsemblFungi" id="AAS52850">
    <property type="protein sequence ID" value="AAS52850"/>
    <property type="gene ID" value="AGOS_AER168C"/>
</dbReference>
<dbReference type="GeneID" id="4621233"/>
<dbReference type="KEGG" id="ago:AGOS_AER168C"/>
<dbReference type="eggNOG" id="KOG2239">
    <property type="taxonomic scope" value="Eukaryota"/>
</dbReference>
<dbReference type="HOGENOM" id="CLU_057806_2_1_1"/>
<dbReference type="InParanoid" id="Q756T5"/>
<dbReference type="OMA" id="SQKMIFA"/>
<dbReference type="OrthoDB" id="3169036at2759"/>
<dbReference type="Proteomes" id="UP000000591">
    <property type="component" value="Chromosome V"/>
</dbReference>
<dbReference type="GO" id="GO:0005737">
    <property type="term" value="C:cytoplasm"/>
    <property type="evidence" value="ECO:0000318"/>
    <property type="project" value="GO_Central"/>
</dbReference>
<dbReference type="GO" id="GO:0005854">
    <property type="term" value="C:nascent polypeptide-associated complex"/>
    <property type="evidence" value="ECO:0007669"/>
    <property type="project" value="EnsemblFungi"/>
</dbReference>
<dbReference type="GO" id="GO:0005634">
    <property type="term" value="C:nucleus"/>
    <property type="evidence" value="ECO:0007669"/>
    <property type="project" value="UniProtKB-SubCell"/>
</dbReference>
<dbReference type="GO" id="GO:0070300">
    <property type="term" value="F:phosphatidic acid binding"/>
    <property type="evidence" value="ECO:0007669"/>
    <property type="project" value="EnsemblFungi"/>
</dbReference>
<dbReference type="GO" id="GO:0080025">
    <property type="term" value="F:phosphatidylinositol-3,5-bisphosphate binding"/>
    <property type="evidence" value="ECO:0007669"/>
    <property type="project" value="EnsemblFungi"/>
</dbReference>
<dbReference type="GO" id="GO:0032266">
    <property type="term" value="F:phosphatidylinositol-3-phosphate binding"/>
    <property type="evidence" value="ECO:0007669"/>
    <property type="project" value="EnsemblFungi"/>
</dbReference>
<dbReference type="GO" id="GO:0070273">
    <property type="term" value="F:phosphatidylinositol-4-phosphate binding"/>
    <property type="evidence" value="ECO:0007669"/>
    <property type="project" value="EnsemblFungi"/>
</dbReference>
<dbReference type="GO" id="GO:0051082">
    <property type="term" value="F:unfolded protein binding"/>
    <property type="evidence" value="ECO:0000318"/>
    <property type="project" value="GO_Central"/>
</dbReference>
<dbReference type="GO" id="GO:0006613">
    <property type="term" value="P:cotranslational protein targeting to membrane"/>
    <property type="evidence" value="ECO:0007669"/>
    <property type="project" value="EnsemblFungi"/>
</dbReference>
<dbReference type="GO" id="GO:0006612">
    <property type="term" value="P:protein targeting to membrane"/>
    <property type="evidence" value="ECO:0000318"/>
    <property type="project" value="GO_Central"/>
</dbReference>
<dbReference type="GO" id="GO:0015031">
    <property type="term" value="P:protein transport"/>
    <property type="evidence" value="ECO:0007669"/>
    <property type="project" value="UniProtKB-KW"/>
</dbReference>
<dbReference type="CDD" id="cd22054">
    <property type="entry name" value="NAC_NACA"/>
    <property type="match status" value="1"/>
</dbReference>
<dbReference type="CDD" id="cd14358">
    <property type="entry name" value="UBA_NAC_euk"/>
    <property type="match status" value="1"/>
</dbReference>
<dbReference type="FunFam" id="1.10.8.10:FF:000006">
    <property type="entry name" value="Putative nascent polypeptide-associated complex subunit alpha"/>
    <property type="match status" value="1"/>
</dbReference>
<dbReference type="Gene3D" id="1.10.8.10">
    <property type="entry name" value="DNA helicase RuvA subunit, C-terminal domain"/>
    <property type="match status" value="1"/>
</dbReference>
<dbReference type="Gene3D" id="2.20.70.30">
    <property type="entry name" value="Nascent polypeptide-associated complex domain"/>
    <property type="match status" value="1"/>
</dbReference>
<dbReference type="InterPro" id="IPR016641">
    <property type="entry name" value="EGD2/NACA0like"/>
</dbReference>
<dbReference type="InterPro" id="IPR044034">
    <property type="entry name" value="NAC-like_UBA"/>
</dbReference>
<dbReference type="InterPro" id="IPR038187">
    <property type="entry name" value="NAC_A/B_dom_sf"/>
</dbReference>
<dbReference type="InterPro" id="IPR002715">
    <property type="entry name" value="Nas_poly-pep-assoc_cplx_dom"/>
</dbReference>
<dbReference type="PANTHER" id="PTHR21713">
    <property type="entry name" value="NASCENT POLYPEPTIDE ASSOCIATED COMPLEX ALPHA SUBUNIT-RELATED"/>
    <property type="match status" value="1"/>
</dbReference>
<dbReference type="Pfam" id="PF01849">
    <property type="entry name" value="NAC"/>
    <property type="match status" value="1"/>
</dbReference>
<dbReference type="Pfam" id="PF19026">
    <property type="entry name" value="UBA_HYPK"/>
    <property type="match status" value="1"/>
</dbReference>
<dbReference type="PIRSF" id="PIRSF015901">
    <property type="entry name" value="NAC_alpha"/>
    <property type="match status" value="1"/>
</dbReference>
<dbReference type="SMART" id="SM01407">
    <property type="entry name" value="NAC"/>
    <property type="match status" value="1"/>
</dbReference>
<dbReference type="PROSITE" id="PS51151">
    <property type="entry name" value="NAC_AB"/>
    <property type="match status" value="1"/>
</dbReference>
<accession>Q756T5</accession>